<keyword id="KW-0963">Cytoplasm</keyword>
<keyword id="KW-0479">Metal-binding</keyword>
<keyword id="KW-0520">NAD</keyword>
<keyword id="KW-0560">Oxidoreductase</keyword>
<keyword id="KW-1185">Reference proteome</keyword>
<keyword id="KW-0862">Zinc</keyword>
<accession>Q5XI95</accession>
<reference key="1">
    <citation type="journal article" date="2004" name="Genome Res.">
        <title>The status, quality, and expansion of the NIH full-length cDNA project: the Mammalian Gene Collection (MGC).</title>
        <authorList>
            <consortium name="The MGC Project Team"/>
        </authorList>
    </citation>
    <scope>NUCLEOTIDE SEQUENCE [LARGE SCALE MRNA]</scope>
    <source>
        <tissue>Kidney</tissue>
    </source>
</reference>
<gene>
    <name type="primary">Adh6</name>
</gene>
<name>ADH6_RAT</name>
<sequence>MGTQGKVIRCKATVLWKPGAPLAIEEIEVAPPKAKEVRIKMVATGVCGTDIKHLDTQELSKFCPMIMGHEGVGIVESVGEGVSSVRTGDKVILLCIPQCGECKTCLNSKNNICTEIRLSKTHLASEGTSRITCKGKLVHQYIALGSFSEYTVLKEISVAKIDEGAPLEKVCIIGCGFATGYGAAINSAKVTPGSTCAVFGLGGVGLSVIIGCKAAGAARIIAVDINKDRFAKAKTVGATDCVDPRDFEKPIEEVLSDMIDGGVDFCFEVTGNTEAVGAALGSCHKDHGVCVTVGALASFTSTLSIRSHLFFSGRILKGSILGGWKTKEEIPKLVSDYMAKKFNIDPLITHTLTLSEANEAVQLMKSGQCIRCVLLL</sequence>
<protein>
    <recommendedName>
        <fullName>Alcohol dehydrogenase 6</fullName>
        <ecNumber evidence="2">1.1.1.1</ecNumber>
    </recommendedName>
</protein>
<feature type="chain" id="PRO_0000160690" description="Alcohol dehydrogenase 6">
    <location>
        <begin position="1"/>
        <end position="376"/>
    </location>
</feature>
<feature type="binding site" evidence="1">
    <location>
        <position position="47"/>
    </location>
    <ligand>
        <name>Zn(2+)</name>
        <dbReference type="ChEBI" id="CHEBI:29105"/>
        <label>1</label>
        <note>catalytic</note>
    </ligand>
</feature>
<feature type="binding site" evidence="1">
    <location>
        <position position="69"/>
    </location>
    <ligand>
        <name>Zn(2+)</name>
        <dbReference type="ChEBI" id="CHEBI:29105"/>
        <label>1</label>
        <note>catalytic</note>
    </ligand>
</feature>
<feature type="binding site" evidence="1">
    <location>
        <position position="99"/>
    </location>
    <ligand>
        <name>Zn(2+)</name>
        <dbReference type="ChEBI" id="CHEBI:29105"/>
        <label>2</label>
    </ligand>
</feature>
<feature type="binding site" evidence="1">
    <location>
        <position position="102"/>
    </location>
    <ligand>
        <name>Zn(2+)</name>
        <dbReference type="ChEBI" id="CHEBI:29105"/>
        <label>2</label>
    </ligand>
</feature>
<feature type="binding site" evidence="1">
    <location>
        <position position="105"/>
    </location>
    <ligand>
        <name>Zn(2+)</name>
        <dbReference type="ChEBI" id="CHEBI:29105"/>
        <label>2</label>
    </ligand>
</feature>
<feature type="binding site" evidence="1">
    <location>
        <position position="113"/>
    </location>
    <ligand>
        <name>Zn(2+)</name>
        <dbReference type="ChEBI" id="CHEBI:29105"/>
        <label>2</label>
    </ligand>
</feature>
<feature type="binding site" evidence="1">
    <location>
        <position position="175"/>
    </location>
    <ligand>
        <name>Zn(2+)</name>
        <dbReference type="ChEBI" id="CHEBI:29105"/>
        <label>1</label>
        <note>catalytic</note>
    </ligand>
</feature>
<feature type="binding site" evidence="1">
    <location>
        <begin position="200"/>
        <end position="205"/>
    </location>
    <ligand>
        <name>NAD(+)</name>
        <dbReference type="ChEBI" id="CHEBI:57540"/>
    </ligand>
</feature>
<feature type="binding site" evidence="1">
    <location>
        <position position="224"/>
    </location>
    <ligand>
        <name>NAD(+)</name>
        <dbReference type="ChEBI" id="CHEBI:57540"/>
    </ligand>
</feature>
<feature type="binding site" evidence="1">
    <location>
        <position position="229"/>
    </location>
    <ligand>
        <name>NAD(+)</name>
        <dbReference type="ChEBI" id="CHEBI:57540"/>
    </ligand>
</feature>
<feature type="binding site" evidence="1">
    <location>
        <begin position="293"/>
        <end position="295"/>
    </location>
    <ligand>
        <name>NAD(+)</name>
        <dbReference type="ChEBI" id="CHEBI:57540"/>
    </ligand>
</feature>
<feature type="binding site" evidence="1">
    <location>
        <position position="371"/>
    </location>
    <ligand>
        <name>NAD(+)</name>
        <dbReference type="ChEBI" id="CHEBI:57540"/>
    </ligand>
</feature>
<evidence type="ECO:0000250" key="1">
    <source>
        <dbReference type="UniProtKB" id="P07327"/>
    </source>
</evidence>
<evidence type="ECO:0000250" key="2">
    <source>
        <dbReference type="UniProtKB" id="P28332"/>
    </source>
</evidence>
<evidence type="ECO:0000250" key="3">
    <source>
        <dbReference type="UniProtKB" id="P41681"/>
    </source>
</evidence>
<evidence type="ECO:0000305" key="4"/>
<comment type="function">
    <text evidence="1 2">Alcohol dehydrogenase (By similarity). Catalyzes the NAD-dependent oxidation of primary alcohols to the corresponding aldehydes (By similarity). Oxidizes secondary alcohols to the corresponding ketones (By similarity).</text>
</comment>
<comment type="catalytic activity">
    <reaction evidence="2">
        <text>a primary alcohol + NAD(+) = an aldehyde + NADH + H(+)</text>
        <dbReference type="Rhea" id="RHEA:10736"/>
        <dbReference type="ChEBI" id="CHEBI:15378"/>
        <dbReference type="ChEBI" id="CHEBI:15734"/>
        <dbReference type="ChEBI" id="CHEBI:17478"/>
        <dbReference type="ChEBI" id="CHEBI:57540"/>
        <dbReference type="ChEBI" id="CHEBI:57945"/>
        <dbReference type="EC" id="1.1.1.1"/>
    </reaction>
</comment>
<comment type="catalytic activity">
    <reaction evidence="1">
        <text>a secondary alcohol + NAD(+) = a ketone + NADH + H(+)</text>
        <dbReference type="Rhea" id="RHEA:10740"/>
        <dbReference type="ChEBI" id="CHEBI:15378"/>
        <dbReference type="ChEBI" id="CHEBI:17087"/>
        <dbReference type="ChEBI" id="CHEBI:35681"/>
        <dbReference type="ChEBI" id="CHEBI:57540"/>
        <dbReference type="ChEBI" id="CHEBI:57945"/>
        <dbReference type="EC" id="1.1.1.1"/>
    </reaction>
</comment>
<comment type="cofactor">
    <cofactor evidence="1">
        <name>Zn(2+)</name>
        <dbReference type="ChEBI" id="CHEBI:29105"/>
    </cofactor>
    <text evidence="1">Binds 2 Zn(2+) ions per subunit.</text>
</comment>
<comment type="subunit">
    <text evidence="3">Dimer.</text>
</comment>
<comment type="subcellular location">
    <subcellularLocation>
        <location>Cytoplasm</location>
    </subcellularLocation>
</comment>
<comment type="similarity">
    <text evidence="4">Belongs to the zinc-containing alcohol dehydrogenase family. Class-V subfamily.</text>
</comment>
<proteinExistence type="evidence at transcript level"/>
<organism>
    <name type="scientific">Rattus norvegicus</name>
    <name type="common">Rat</name>
    <dbReference type="NCBI Taxonomy" id="10116"/>
    <lineage>
        <taxon>Eukaryota</taxon>
        <taxon>Metazoa</taxon>
        <taxon>Chordata</taxon>
        <taxon>Craniata</taxon>
        <taxon>Vertebrata</taxon>
        <taxon>Euteleostomi</taxon>
        <taxon>Mammalia</taxon>
        <taxon>Eutheria</taxon>
        <taxon>Euarchontoglires</taxon>
        <taxon>Glires</taxon>
        <taxon>Rodentia</taxon>
        <taxon>Myomorpha</taxon>
        <taxon>Muroidea</taxon>
        <taxon>Muridae</taxon>
        <taxon>Murinae</taxon>
        <taxon>Rattus</taxon>
    </lineage>
</organism>
<dbReference type="EC" id="1.1.1.1" evidence="2"/>
<dbReference type="EMBL" id="BC083792">
    <property type="protein sequence ID" value="AAH83792.1"/>
    <property type="molecule type" value="mRNA"/>
</dbReference>
<dbReference type="RefSeq" id="NP_001012084.1">
    <property type="nucleotide sequence ID" value="NM_001012084.1"/>
</dbReference>
<dbReference type="SMR" id="Q5XI95"/>
<dbReference type="FunCoup" id="Q5XI95">
    <property type="interactions" value="138"/>
</dbReference>
<dbReference type="GlyGen" id="Q5XI95">
    <property type="glycosylation" value="1 site"/>
</dbReference>
<dbReference type="PhosphoSitePlus" id="Q5XI95"/>
<dbReference type="PaxDb" id="10116-ENSRNOP00000030638"/>
<dbReference type="GeneID" id="310903"/>
<dbReference type="KEGG" id="rno:310903"/>
<dbReference type="AGR" id="RGD:1306313"/>
<dbReference type="CTD" id="130"/>
<dbReference type="RGD" id="1306313">
    <property type="gene designation" value="Adh6"/>
</dbReference>
<dbReference type="VEuPathDB" id="HostDB:ENSRNOG00000069176"/>
<dbReference type="eggNOG" id="KOG0022">
    <property type="taxonomic scope" value="Eukaryota"/>
</dbReference>
<dbReference type="InParanoid" id="Q5XI95"/>
<dbReference type="PhylomeDB" id="Q5XI95"/>
<dbReference type="TreeFam" id="TF300429"/>
<dbReference type="Reactome" id="R-RNO-71384">
    <property type="pathway name" value="Ethanol oxidation"/>
</dbReference>
<dbReference type="PRO" id="PR:Q5XI95"/>
<dbReference type="Proteomes" id="UP000002494">
    <property type="component" value="Chromosome 2"/>
</dbReference>
<dbReference type="Bgee" id="ENSRNOG00000012436">
    <property type="expression patterns" value="Expressed in liver and 19 other cell types or tissues"/>
</dbReference>
<dbReference type="ExpressionAtlas" id="Q5XI95">
    <property type="expression patterns" value="baseline and differential"/>
</dbReference>
<dbReference type="GO" id="GO:0005829">
    <property type="term" value="C:cytosol"/>
    <property type="evidence" value="ECO:0000318"/>
    <property type="project" value="GO_Central"/>
</dbReference>
<dbReference type="GO" id="GO:0004022">
    <property type="term" value="F:alcohol dehydrogenase (NAD+) activity"/>
    <property type="evidence" value="ECO:0000266"/>
    <property type="project" value="RGD"/>
</dbReference>
<dbReference type="GO" id="GO:0004745">
    <property type="term" value="F:all-trans-retinol dehydrogenase (NAD+) activity"/>
    <property type="evidence" value="ECO:0000318"/>
    <property type="project" value="GO_Central"/>
</dbReference>
<dbReference type="GO" id="GO:0008270">
    <property type="term" value="F:zinc ion binding"/>
    <property type="evidence" value="ECO:0000318"/>
    <property type="project" value="GO_Central"/>
</dbReference>
<dbReference type="GO" id="GO:0042573">
    <property type="term" value="P:retinoic acid metabolic process"/>
    <property type="evidence" value="ECO:0000318"/>
    <property type="project" value="GO_Central"/>
</dbReference>
<dbReference type="GO" id="GO:0042572">
    <property type="term" value="P:retinol metabolic process"/>
    <property type="evidence" value="ECO:0000318"/>
    <property type="project" value="GO_Central"/>
</dbReference>
<dbReference type="CDD" id="cd08299">
    <property type="entry name" value="alcohol_DH_class_I_II_IV"/>
    <property type="match status" value="1"/>
</dbReference>
<dbReference type="FunFam" id="3.90.180.10:FF:000067">
    <property type="entry name" value="alcohol dehydrogenase 1-like isoform X1"/>
    <property type="match status" value="1"/>
</dbReference>
<dbReference type="FunFam" id="3.40.50.720:FF:000003">
    <property type="entry name" value="S-(hydroxymethyl)glutathione dehydrogenase"/>
    <property type="match status" value="1"/>
</dbReference>
<dbReference type="Gene3D" id="3.90.180.10">
    <property type="entry name" value="Medium-chain alcohol dehydrogenases, catalytic domain"/>
    <property type="match status" value="1"/>
</dbReference>
<dbReference type="Gene3D" id="3.40.50.720">
    <property type="entry name" value="NAD(P)-binding Rossmann-like Domain"/>
    <property type="match status" value="1"/>
</dbReference>
<dbReference type="InterPro" id="IPR013149">
    <property type="entry name" value="ADH-like_C"/>
</dbReference>
<dbReference type="InterPro" id="IPR013154">
    <property type="entry name" value="ADH-like_N"/>
</dbReference>
<dbReference type="InterPro" id="IPR002328">
    <property type="entry name" value="ADH_Zn_CS"/>
</dbReference>
<dbReference type="InterPro" id="IPR011032">
    <property type="entry name" value="GroES-like_sf"/>
</dbReference>
<dbReference type="InterPro" id="IPR036291">
    <property type="entry name" value="NAD(P)-bd_dom_sf"/>
</dbReference>
<dbReference type="InterPro" id="IPR020843">
    <property type="entry name" value="PKS_ER"/>
</dbReference>
<dbReference type="PANTHER" id="PTHR43880">
    <property type="entry name" value="ALCOHOL DEHYDROGENASE"/>
    <property type="match status" value="1"/>
</dbReference>
<dbReference type="PANTHER" id="PTHR43880:SF20">
    <property type="entry name" value="ALCOHOL DEHYDROGENASE 6"/>
    <property type="match status" value="1"/>
</dbReference>
<dbReference type="Pfam" id="PF08240">
    <property type="entry name" value="ADH_N"/>
    <property type="match status" value="1"/>
</dbReference>
<dbReference type="Pfam" id="PF00107">
    <property type="entry name" value="ADH_zinc_N"/>
    <property type="match status" value="1"/>
</dbReference>
<dbReference type="SMART" id="SM00829">
    <property type="entry name" value="PKS_ER"/>
    <property type="match status" value="1"/>
</dbReference>
<dbReference type="SUPFAM" id="SSF50129">
    <property type="entry name" value="GroES-like"/>
    <property type="match status" value="2"/>
</dbReference>
<dbReference type="SUPFAM" id="SSF51735">
    <property type="entry name" value="NAD(P)-binding Rossmann-fold domains"/>
    <property type="match status" value="1"/>
</dbReference>
<dbReference type="PROSITE" id="PS00059">
    <property type="entry name" value="ADH_ZINC"/>
    <property type="match status" value="1"/>
</dbReference>